<gene>
    <name evidence="1" type="primary">atpB</name>
    <name type="ordered locus">Bsph_1010</name>
</gene>
<proteinExistence type="inferred from homology"/>
<comment type="function">
    <text evidence="1">Key component of the proton channel; it plays a direct role in the translocation of protons across the membrane.</text>
</comment>
<comment type="subunit">
    <text evidence="1">F-type ATPases have 2 components, CF(1) - the catalytic core - and CF(0) - the membrane proton channel. CF(1) has five subunits: alpha(3), beta(3), gamma(1), delta(1), epsilon(1). CF(0) has three main subunits: a(1), b(2) and c(9-12). The alpha and beta chains form an alternating ring which encloses part of the gamma chain. CF(1) is attached to CF(0) by a central stalk formed by the gamma and epsilon chains, while a peripheral stalk is formed by the delta and b chains.</text>
</comment>
<comment type="subcellular location">
    <subcellularLocation>
        <location evidence="1">Cell membrane</location>
        <topology evidence="1">Multi-pass membrane protein</topology>
    </subcellularLocation>
</comment>
<comment type="similarity">
    <text evidence="1">Belongs to the ATPase A chain family.</text>
</comment>
<organism>
    <name type="scientific">Lysinibacillus sphaericus (strain C3-41)</name>
    <dbReference type="NCBI Taxonomy" id="444177"/>
    <lineage>
        <taxon>Bacteria</taxon>
        <taxon>Bacillati</taxon>
        <taxon>Bacillota</taxon>
        <taxon>Bacilli</taxon>
        <taxon>Bacillales</taxon>
        <taxon>Bacillaceae</taxon>
        <taxon>Lysinibacillus</taxon>
    </lineage>
</organism>
<reference key="1">
    <citation type="journal article" date="2008" name="J. Bacteriol.">
        <title>Complete genome sequence of the mosquitocidal bacterium Bacillus sphaericus C3-41 and comparison with those of closely related Bacillus species.</title>
        <authorList>
            <person name="Hu X."/>
            <person name="Fan W."/>
            <person name="Han B."/>
            <person name="Liu H."/>
            <person name="Zheng D."/>
            <person name="Li Q."/>
            <person name="Dong W."/>
            <person name="Yan J."/>
            <person name="Gao M."/>
            <person name="Berry C."/>
            <person name="Yuan Z."/>
        </authorList>
    </citation>
    <scope>NUCLEOTIDE SEQUENCE [LARGE SCALE GENOMIC DNA]</scope>
    <source>
        <strain>C3-41</strain>
    </source>
</reference>
<feature type="chain" id="PRO_1000145289" description="ATP synthase subunit a">
    <location>
        <begin position="1"/>
        <end position="236"/>
    </location>
</feature>
<feature type="transmembrane region" description="Helical" evidence="1">
    <location>
        <begin position="18"/>
        <end position="38"/>
    </location>
</feature>
<feature type="transmembrane region" description="Helical" evidence="1">
    <location>
        <begin position="79"/>
        <end position="99"/>
    </location>
</feature>
<feature type="transmembrane region" description="Helical" evidence="1">
    <location>
        <begin position="112"/>
        <end position="132"/>
    </location>
</feature>
<feature type="transmembrane region" description="Helical" evidence="1">
    <location>
        <begin position="174"/>
        <end position="194"/>
    </location>
</feature>
<feature type="transmembrane region" description="Helical" evidence="1">
    <location>
        <begin position="205"/>
        <end position="227"/>
    </location>
</feature>
<accession>B1HM50</accession>
<name>ATP6_LYSSC</name>
<keyword id="KW-0066">ATP synthesis</keyword>
<keyword id="KW-1003">Cell membrane</keyword>
<keyword id="KW-0138">CF(0)</keyword>
<keyword id="KW-0375">Hydrogen ion transport</keyword>
<keyword id="KW-0406">Ion transport</keyword>
<keyword id="KW-0472">Membrane</keyword>
<keyword id="KW-0812">Transmembrane</keyword>
<keyword id="KW-1133">Transmembrane helix</keyword>
<keyword id="KW-0813">Transport</keyword>
<protein>
    <recommendedName>
        <fullName evidence="1">ATP synthase subunit a</fullName>
    </recommendedName>
    <alternativeName>
        <fullName evidence="1">ATP synthase F0 sector subunit a</fullName>
    </alternativeName>
    <alternativeName>
        <fullName evidence="1">F-ATPase subunit 6</fullName>
    </alternativeName>
</protein>
<evidence type="ECO:0000255" key="1">
    <source>
        <dbReference type="HAMAP-Rule" id="MF_01393"/>
    </source>
</evidence>
<dbReference type="EMBL" id="CP000817">
    <property type="protein sequence ID" value="ACA38622.1"/>
    <property type="molecule type" value="Genomic_DNA"/>
</dbReference>
<dbReference type="RefSeq" id="WP_012292763.1">
    <property type="nucleotide sequence ID" value="NC_010382.1"/>
</dbReference>
<dbReference type="SMR" id="B1HM50"/>
<dbReference type="EnsemblBacteria" id="ACA38622">
    <property type="protein sequence ID" value="ACA38622"/>
    <property type="gene ID" value="Bsph_1010"/>
</dbReference>
<dbReference type="KEGG" id="lsp:Bsph_1010"/>
<dbReference type="HOGENOM" id="CLU_041018_2_3_9"/>
<dbReference type="Proteomes" id="UP000002164">
    <property type="component" value="Chromosome"/>
</dbReference>
<dbReference type="GO" id="GO:0005886">
    <property type="term" value="C:plasma membrane"/>
    <property type="evidence" value="ECO:0007669"/>
    <property type="project" value="UniProtKB-SubCell"/>
</dbReference>
<dbReference type="GO" id="GO:0045259">
    <property type="term" value="C:proton-transporting ATP synthase complex"/>
    <property type="evidence" value="ECO:0007669"/>
    <property type="project" value="UniProtKB-KW"/>
</dbReference>
<dbReference type="GO" id="GO:0046933">
    <property type="term" value="F:proton-transporting ATP synthase activity, rotational mechanism"/>
    <property type="evidence" value="ECO:0007669"/>
    <property type="project" value="UniProtKB-UniRule"/>
</dbReference>
<dbReference type="GO" id="GO:0042777">
    <property type="term" value="P:proton motive force-driven plasma membrane ATP synthesis"/>
    <property type="evidence" value="ECO:0007669"/>
    <property type="project" value="TreeGrafter"/>
</dbReference>
<dbReference type="CDD" id="cd00310">
    <property type="entry name" value="ATP-synt_Fo_a_6"/>
    <property type="match status" value="1"/>
</dbReference>
<dbReference type="FunFam" id="1.20.120.220:FF:000005">
    <property type="entry name" value="ATP synthase subunit a"/>
    <property type="match status" value="1"/>
</dbReference>
<dbReference type="Gene3D" id="1.20.120.220">
    <property type="entry name" value="ATP synthase, F0 complex, subunit A"/>
    <property type="match status" value="1"/>
</dbReference>
<dbReference type="HAMAP" id="MF_01393">
    <property type="entry name" value="ATP_synth_a_bact"/>
    <property type="match status" value="1"/>
</dbReference>
<dbReference type="InterPro" id="IPR045082">
    <property type="entry name" value="ATP_syn_F0_a_bact/chloroplast"/>
</dbReference>
<dbReference type="InterPro" id="IPR000568">
    <property type="entry name" value="ATP_synth_F0_asu"/>
</dbReference>
<dbReference type="InterPro" id="IPR023011">
    <property type="entry name" value="ATP_synth_F0_asu_AS"/>
</dbReference>
<dbReference type="InterPro" id="IPR035908">
    <property type="entry name" value="F0_ATP_A_sf"/>
</dbReference>
<dbReference type="NCBIfam" id="TIGR01131">
    <property type="entry name" value="ATP_synt_6_or_A"/>
    <property type="match status" value="1"/>
</dbReference>
<dbReference type="NCBIfam" id="NF004479">
    <property type="entry name" value="PRK05815.1-4"/>
    <property type="match status" value="1"/>
</dbReference>
<dbReference type="PANTHER" id="PTHR42823">
    <property type="entry name" value="ATP SYNTHASE SUBUNIT A, CHLOROPLASTIC"/>
    <property type="match status" value="1"/>
</dbReference>
<dbReference type="PANTHER" id="PTHR42823:SF3">
    <property type="entry name" value="ATP SYNTHASE SUBUNIT A, CHLOROPLASTIC"/>
    <property type="match status" value="1"/>
</dbReference>
<dbReference type="Pfam" id="PF00119">
    <property type="entry name" value="ATP-synt_A"/>
    <property type="match status" value="1"/>
</dbReference>
<dbReference type="PRINTS" id="PR00123">
    <property type="entry name" value="ATPASEA"/>
</dbReference>
<dbReference type="SUPFAM" id="SSF81336">
    <property type="entry name" value="F1F0 ATP synthase subunit A"/>
    <property type="match status" value="1"/>
</dbReference>
<dbReference type="PROSITE" id="PS00449">
    <property type="entry name" value="ATPASE_A"/>
    <property type="match status" value="1"/>
</dbReference>
<sequence length="236" mass="26303">MNHEAPLLEVGFLTFNKSTVMMLLVAAIIVFLIAFISTRSLKLKPTGMQNFMEWIMDFVKNIIKSNMDWKTGGRFHILGITLIMFIAVSNLLGLPFSIVYGHELWWKSPTADPTVTMTLATMILVLSHFYGVKMKGTGHYAGTFFKPMSFMFPLKLVEEFANTLTLGLRLYGNIYAGEILLGLLAGLASSGAVGFIGAIVPMMAWQGFSIFIGFIQAFIFTMLTMVYMAHKVSDDH</sequence>